<organism>
    <name type="scientific">Salmonella newport (strain SL254)</name>
    <dbReference type="NCBI Taxonomy" id="423368"/>
    <lineage>
        <taxon>Bacteria</taxon>
        <taxon>Pseudomonadati</taxon>
        <taxon>Pseudomonadota</taxon>
        <taxon>Gammaproteobacteria</taxon>
        <taxon>Enterobacterales</taxon>
        <taxon>Enterobacteriaceae</taxon>
        <taxon>Salmonella</taxon>
    </lineage>
</organism>
<reference key="1">
    <citation type="journal article" date="2011" name="J. Bacteriol.">
        <title>Comparative genomics of 28 Salmonella enterica isolates: evidence for CRISPR-mediated adaptive sublineage evolution.</title>
        <authorList>
            <person name="Fricke W.F."/>
            <person name="Mammel M.K."/>
            <person name="McDermott P.F."/>
            <person name="Tartera C."/>
            <person name="White D.G."/>
            <person name="Leclerc J.E."/>
            <person name="Ravel J."/>
            <person name="Cebula T.A."/>
        </authorList>
    </citation>
    <scope>NUCLEOTIDE SEQUENCE [LARGE SCALE GENOMIC DNA]</scope>
    <source>
        <strain>SL254</strain>
    </source>
</reference>
<comment type="function">
    <text evidence="1">Succinyl-CoA synthetase functions in the citric acid cycle (TCA), coupling the hydrolysis of succinyl-CoA to the synthesis of either ATP or GTP and thus represents the only step of substrate-level phosphorylation in the TCA. The beta subunit provides nucleotide specificity of the enzyme and binds the substrate succinate, while the binding sites for coenzyme A and phosphate are found in the alpha subunit.</text>
</comment>
<comment type="catalytic activity">
    <reaction evidence="1">
        <text>succinate + ATP + CoA = succinyl-CoA + ADP + phosphate</text>
        <dbReference type="Rhea" id="RHEA:17661"/>
        <dbReference type="ChEBI" id="CHEBI:30031"/>
        <dbReference type="ChEBI" id="CHEBI:30616"/>
        <dbReference type="ChEBI" id="CHEBI:43474"/>
        <dbReference type="ChEBI" id="CHEBI:57287"/>
        <dbReference type="ChEBI" id="CHEBI:57292"/>
        <dbReference type="ChEBI" id="CHEBI:456216"/>
        <dbReference type="EC" id="6.2.1.5"/>
    </reaction>
    <physiologicalReaction direction="right-to-left" evidence="1">
        <dbReference type="Rhea" id="RHEA:17663"/>
    </physiologicalReaction>
</comment>
<comment type="catalytic activity">
    <reaction evidence="1">
        <text>GTP + succinate + CoA = succinyl-CoA + GDP + phosphate</text>
        <dbReference type="Rhea" id="RHEA:22120"/>
        <dbReference type="ChEBI" id="CHEBI:30031"/>
        <dbReference type="ChEBI" id="CHEBI:37565"/>
        <dbReference type="ChEBI" id="CHEBI:43474"/>
        <dbReference type="ChEBI" id="CHEBI:57287"/>
        <dbReference type="ChEBI" id="CHEBI:57292"/>
        <dbReference type="ChEBI" id="CHEBI:58189"/>
    </reaction>
    <physiologicalReaction direction="right-to-left" evidence="1">
        <dbReference type="Rhea" id="RHEA:22122"/>
    </physiologicalReaction>
</comment>
<comment type="cofactor">
    <cofactor evidence="1">
        <name>Mg(2+)</name>
        <dbReference type="ChEBI" id="CHEBI:18420"/>
    </cofactor>
    <text evidence="1">Binds 1 Mg(2+) ion per subunit.</text>
</comment>
<comment type="pathway">
    <text evidence="1">Carbohydrate metabolism; tricarboxylic acid cycle; succinate from succinyl-CoA (ligase route): step 1/1.</text>
</comment>
<comment type="subunit">
    <text evidence="1">Heterotetramer of two alpha and two beta subunits.</text>
</comment>
<comment type="similarity">
    <text evidence="1">Belongs to the succinate/malate CoA ligase beta subunit family.</text>
</comment>
<accession>B4SZE2</accession>
<evidence type="ECO:0000255" key="1">
    <source>
        <dbReference type="HAMAP-Rule" id="MF_00558"/>
    </source>
</evidence>
<sequence length="388" mass="41481">MNLHEYQAKQLFARYGLPAPVGYACTTPREAEEAASKIGAGPWVVKCQVHAGGRGKAGGVKVVKSKEEIRAFAENWLGKRLVTYQTDANGQPVNQILVEAATDIGKELYLGAVVDRSSRRVVFMASTEGGVEIEKVAEETPHLIHKVALDPLTGPMPYQGRELAFKLGLEGKLVQQFTKIFMGLATIFLERDLALIEINPLVITKQGDLICLDGKLGADGNALFRQPDLREMRDQSQEDPREAQAAQWELNYVALDGNIGCMVNGAGLAMGTMDIVKLHGGEPANFLDVGGGATKERVTEAFKIILSDDNVKAVLVNIFGGIVRCDLIADGIIGAVEEVGVNVPVVVRLEGNNAELGAKKLADSGLNIIAAKSLTDAAQQVVAAVEGK</sequence>
<gene>
    <name evidence="1" type="primary">sucC</name>
    <name type="ordered locus">SNSL254_A0797</name>
</gene>
<protein>
    <recommendedName>
        <fullName evidence="1">Succinate--CoA ligase [ADP-forming] subunit beta</fullName>
        <ecNumber evidence="1">6.2.1.5</ecNumber>
    </recommendedName>
    <alternativeName>
        <fullName evidence="1">Succinyl-CoA synthetase subunit beta</fullName>
        <shortName evidence="1">SCS-beta</shortName>
    </alternativeName>
</protein>
<name>SUCC_SALNS</name>
<proteinExistence type="inferred from homology"/>
<dbReference type="EC" id="6.2.1.5" evidence="1"/>
<dbReference type="EMBL" id="CP001113">
    <property type="protein sequence ID" value="ACF64602.1"/>
    <property type="molecule type" value="Genomic_DNA"/>
</dbReference>
<dbReference type="RefSeq" id="WP_001048590.1">
    <property type="nucleotide sequence ID" value="NZ_CCMR01000003.1"/>
</dbReference>
<dbReference type="SMR" id="B4SZE2"/>
<dbReference type="KEGG" id="see:SNSL254_A0797"/>
<dbReference type="HOGENOM" id="CLU_037430_4_0_6"/>
<dbReference type="UniPathway" id="UPA00223">
    <property type="reaction ID" value="UER00999"/>
</dbReference>
<dbReference type="Proteomes" id="UP000008824">
    <property type="component" value="Chromosome"/>
</dbReference>
<dbReference type="GO" id="GO:0005829">
    <property type="term" value="C:cytosol"/>
    <property type="evidence" value="ECO:0007669"/>
    <property type="project" value="TreeGrafter"/>
</dbReference>
<dbReference type="GO" id="GO:0042709">
    <property type="term" value="C:succinate-CoA ligase complex"/>
    <property type="evidence" value="ECO:0007669"/>
    <property type="project" value="TreeGrafter"/>
</dbReference>
<dbReference type="GO" id="GO:0005524">
    <property type="term" value="F:ATP binding"/>
    <property type="evidence" value="ECO:0007669"/>
    <property type="project" value="UniProtKB-UniRule"/>
</dbReference>
<dbReference type="GO" id="GO:0000287">
    <property type="term" value="F:magnesium ion binding"/>
    <property type="evidence" value="ECO:0007669"/>
    <property type="project" value="UniProtKB-UniRule"/>
</dbReference>
<dbReference type="GO" id="GO:0004775">
    <property type="term" value="F:succinate-CoA ligase (ADP-forming) activity"/>
    <property type="evidence" value="ECO:0007669"/>
    <property type="project" value="UniProtKB-UniRule"/>
</dbReference>
<dbReference type="GO" id="GO:0004776">
    <property type="term" value="F:succinate-CoA ligase (GDP-forming) activity"/>
    <property type="evidence" value="ECO:0007669"/>
    <property type="project" value="RHEA"/>
</dbReference>
<dbReference type="GO" id="GO:0006104">
    <property type="term" value="P:succinyl-CoA metabolic process"/>
    <property type="evidence" value="ECO:0007669"/>
    <property type="project" value="TreeGrafter"/>
</dbReference>
<dbReference type="GO" id="GO:0006099">
    <property type="term" value="P:tricarboxylic acid cycle"/>
    <property type="evidence" value="ECO:0007669"/>
    <property type="project" value="UniProtKB-UniRule"/>
</dbReference>
<dbReference type="FunFam" id="3.30.1490.20:FF:000002">
    <property type="entry name" value="Succinate--CoA ligase [ADP-forming] subunit beta"/>
    <property type="match status" value="1"/>
</dbReference>
<dbReference type="FunFam" id="3.30.470.20:FF:000002">
    <property type="entry name" value="Succinate--CoA ligase [ADP-forming] subunit beta"/>
    <property type="match status" value="1"/>
</dbReference>
<dbReference type="FunFam" id="3.40.50.261:FF:000001">
    <property type="entry name" value="Succinate--CoA ligase [ADP-forming] subunit beta"/>
    <property type="match status" value="1"/>
</dbReference>
<dbReference type="Gene3D" id="3.30.1490.20">
    <property type="entry name" value="ATP-grasp fold, A domain"/>
    <property type="match status" value="1"/>
</dbReference>
<dbReference type="Gene3D" id="3.30.470.20">
    <property type="entry name" value="ATP-grasp fold, B domain"/>
    <property type="match status" value="1"/>
</dbReference>
<dbReference type="Gene3D" id="3.40.50.261">
    <property type="entry name" value="Succinyl-CoA synthetase domains"/>
    <property type="match status" value="1"/>
</dbReference>
<dbReference type="HAMAP" id="MF_00558">
    <property type="entry name" value="Succ_CoA_beta"/>
    <property type="match status" value="1"/>
</dbReference>
<dbReference type="InterPro" id="IPR011761">
    <property type="entry name" value="ATP-grasp"/>
</dbReference>
<dbReference type="InterPro" id="IPR013650">
    <property type="entry name" value="ATP-grasp_succ-CoA_synth-type"/>
</dbReference>
<dbReference type="InterPro" id="IPR013815">
    <property type="entry name" value="ATP_grasp_subdomain_1"/>
</dbReference>
<dbReference type="InterPro" id="IPR017866">
    <property type="entry name" value="Succ-CoA_synthase_bsu_CS"/>
</dbReference>
<dbReference type="InterPro" id="IPR005811">
    <property type="entry name" value="SUCC_ACL_C"/>
</dbReference>
<dbReference type="InterPro" id="IPR005809">
    <property type="entry name" value="Succ_CoA_ligase-like_bsu"/>
</dbReference>
<dbReference type="InterPro" id="IPR016102">
    <property type="entry name" value="Succinyl-CoA_synth-like"/>
</dbReference>
<dbReference type="NCBIfam" id="NF001913">
    <property type="entry name" value="PRK00696.1"/>
    <property type="match status" value="1"/>
</dbReference>
<dbReference type="NCBIfam" id="TIGR01016">
    <property type="entry name" value="sucCoAbeta"/>
    <property type="match status" value="1"/>
</dbReference>
<dbReference type="PANTHER" id="PTHR11815:SF10">
    <property type="entry name" value="SUCCINATE--COA LIGASE [GDP-FORMING] SUBUNIT BETA, MITOCHONDRIAL"/>
    <property type="match status" value="1"/>
</dbReference>
<dbReference type="PANTHER" id="PTHR11815">
    <property type="entry name" value="SUCCINYL-COA SYNTHETASE BETA CHAIN"/>
    <property type="match status" value="1"/>
</dbReference>
<dbReference type="Pfam" id="PF08442">
    <property type="entry name" value="ATP-grasp_2"/>
    <property type="match status" value="1"/>
</dbReference>
<dbReference type="Pfam" id="PF00549">
    <property type="entry name" value="Ligase_CoA"/>
    <property type="match status" value="1"/>
</dbReference>
<dbReference type="PIRSF" id="PIRSF001554">
    <property type="entry name" value="SucCS_beta"/>
    <property type="match status" value="1"/>
</dbReference>
<dbReference type="SUPFAM" id="SSF56059">
    <property type="entry name" value="Glutathione synthetase ATP-binding domain-like"/>
    <property type="match status" value="1"/>
</dbReference>
<dbReference type="SUPFAM" id="SSF52210">
    <property type="entry name" value="Succinyl-CoA synthetase domains"/>
    <property type="match status" value="1"/>
</dbReference>
<dbReference type="PROSITE" id="PS50975">
    <property type="entry name" value="ATP_GRASP"/>
    <property type="match status" value="1"/>
</dbReference>
<dbReference type="PROSITE" id="PS01217">
    <property type="entry name" value="SUCCINYL_COA_LIG_3"/>
    <property type="match status" value="1"/>
</dbReference>
<keyword id="KW-0067">ATP-binding</keyword>
<keyword id="KW-0436">Ligase</keyword>
<keyword id="KW-0460">Magnesium</keyword>
<keyword id="KW-0479">Metal-binding</keyword>
<keyword id="KW-0547">Nucleotide-binding</keyword>
<keyword id="KW-0816">Tricarboxylic acid cycle</keyword>
<feature type="chain" id="PRO_1000129225" description="Succinate--CoA ligase [ADP-forming] subunit beta">
    <location>
        <begin position="1"/>
        <end position="388"/>
    </location>
</feature>
<feature type="domain" description="ATP-grasp" evidence="1">
    <location>
        <begin position="9"/>
        <end position="244"/>
    </location>
</feature>
<feature type="binding site" evidence="1">
    <location>
        <position position="46"/>
    </location>
    <ligand>
        <name>ATP</name>
        <dbReference type="ChEBI" id="CHEBI:30616"/>
    </ligand>
</feature>
<feature type="binding site" evidence="1">
    <location>
        <begin position="53"/>
        <end position="55"/>
    </location>
    <ligand>
        <name>ATP</name>
        <dbReference type="ChEBI" id="CHEBI:30616"/>
    </ligand>
</feature>
<feature type="binding site" evidence="1">
    <location>
        <position position="99"/>
    </location>
    <ligand>
        <name>ATP</name>
        <dbReference type="ChEBI" id="CHEBI:30616"/>
    </ligand>
</feature>
<feature type="binding site" evidence="1">
    <location>
        <position position="102"/>
    </location>
    <ligand>
        <name>ATP</name>
        <dbReference type="ChEBI" id="CHEBI:30616"/>
    </ligand>
</feature>
<feature type="binding site" evidence="1">
    <location>
        <position position="107"/>
    </location>
    <ligand>
        <name>ATP</name>
        <dbReference type="ChEBI" id="CHEBI:30616"/>
    </ligand>
</feature>
<feature type="binding site" evidence="1">
    <location>
        <position position="199"/>
    </location>
    <ligand>
        <name>Mg(2+)</name>
        <dbReference type="ChEBI" id="CHEBI:18420"/>
    </ligand>
</feature>
<feature type="binding site" evidence="1">
    <location>
        <position position="213"/>
    </location>
    <ligand>
        <name>Mg(2+)</name>
        <dbReference type="ChEBI" id="CHEBI:18420"/>
    </ligand>
</feature>
<feature type="binding site" evidence="1">
    <location>
        <position position="264"/>
    </location>
    <ligand>
        <name>substrate</name>
        <note>ligand shared with subunit alpha</note>
    </ligand>
</feature>
<feature type="binding site" evidence="1">
    <location>
        <begin position="321"/>
        <end position="323"/>
    </location>
    <ligand>
        <name>substrate</name>
        <note>ligand shared with subunit alpha</note>
    </ligand>
</feature>